<feature type="chain" id="PRO_5000247418" description="PTS system glucoside-specific EIICBA component">
    <location>
        <begin position="1"/>
        <end position="688"/>
    </location>
</feature>
<feature type="transmembrane region" description="Helical" evidence="4">
    <location>
        <begin position="12"/>
        <end position="32"/>
    </location>
</feature>
<feature type="transmembrane region" description="Helical" evidence="4">
    <location>
        <begin position="81"/>
        <end position="101"/>
    </location>
</feature>
<feature type="transmembrane region" description="Helical" evidence="4">
    <location>
        <begin position="137"/>
        <end position="157"/>
    </location>
</feature>
<feature type="transmembrane region" description="Helical" evidence="4">
    <location>
        <begin position="182"/>
        <end position="202"/>
    </location>
</feature>
<feature type="transmembrane region" description="Helical" evidence="4">
    <location>
        <begin position="223"/>
        <end position="243"/>
    </location>
</feature>
<feature type="transmembrane region" description="Helical" evidence="4">
    <location>
        <begin position="284"/>
        <end position="304"/>
    </location>
</feature>
<feature type="transmembrane region" description="Helical" evidence="4">
    <location>
        <begin position="315"/>
        <end position="335"/>
    </location>
</feature>
<feature type="transmembrane region" description="Helical" evidence="4">
    <location>
        <begin position="340"/>
        <end position="360"/>
    </location>
</feature>
<feature type="transmembrane region" description="Helical" evidence="4">
    <location>
        <begin position="364"/>
        <end position="384"/>
    </location>
</feature>
<feature type="transmembrane region" description="Helical" evidence="4">
    <location>
        <begin position="395"/>
        <end position="415"/>
    </location>
</feature>
<feature type="domain" description="PTS EIIC type-1" evidence="4">
    <location>
        <begin position="3"/>
        <end position="427"/>
    </location>
</feature>
<feature type="domain" description="PTS EIIB type-1" evidence="3">
    <location>
        <begin position="438"/>
        <end position="519"/>
    </location>
</feature>
<feature type="domain" description="PTS EIIA type-1" evidence="2">
    <location>
        <begin position="560"/>
        <end position="664"/>
    </location>
</feature>
<feature type="active site" description="Phosphocysteine intermediate; for EIIB activity" evidence="3">
    <location>
        <position position="460"/>
    </location>
</feature>
<feature type="active site" description="Tele-phosphohistidine intermediate; for EIIA activity" evidence="2">
    <location>
        <position position="612"/>
    </location>
</feature>
<gene>
    <name type="primary">glcB</name>
    <name type="ordered locus">SaurJH9_2561</name>
</gene>
<sequence>MFKKLFGQLQRIGKALMLPVAILPAAGILLAFGNAMHNEQLVEIAPWLKNDIIVMISSVMEAAGQVVFDNLPLLFAVGTALGLAGGDGVAALAALVGYLIMNATMGKVLHITIDDIFSYAKGAKELSQAAKEPAHALVLGIPTLQTGVFGGIIMGALAAWCYNKFYNITLPPFLGFFAGKRFVPIVTSVVAIATGVLLSFAWPPIQDGLNSLSNFLLNKNLTLTTFIFGIIERSLIPFGLHHIFYSPFWFEFGSYTNHAGELVRGDQRIWMAQLKDGVPFTAGAFTTGKYPFMMFGLPAAAFAIYKNARPERKKVVGGLMLSAGLTAFLTGITEPLEFSFLFVAPVLYGIHVLLAGTSFLVMHLLGVKIGMTFSGGFIDYILYGLLNWDRSHALLVIPVGIVYAIVYYFLFDFAIRKFKLKTPGREDEETEIRNSSVAKLPFDVLDAMGGKENIKHLDACITRLRVEVVDKSKVDVAGIKALGASGVLEVGNNMQAIFGPKSDQIKHDMAKIMSGEITKPSETTVTEEMSDEPVHVEALGTTDIYAPGVGQIIPLSEVPDQVFAGKMMGDGIGFIPEKGEIVAPFDGTVKTIFPTKHAIGLESESGVEVLIHIGIDTVKLNGEGFESLINVDEKVTQGQPLMKVNLAYLKAHAPSIVTPMIITNLENKELVIEDVQDADPGKLIMTVK</sequence>
<reference key="1">
    <citation type="submission" date="2007-05" db="EMBL/GenBank/DDBJ databases">
        <title>Complete sequence of chromosome of Staphylococcus aureus subsp. aureus JH9.</title>
        <authorList>
            <consortium name="US DOE Joint Genome Institute"/>
            <person name="Copeland A."/>
            <person name="Lucas S."/>
            <person name="Lapidus A."/>
            <person name="Barry K."/>
            <person name="Detter J.C."/>
            <person name="Glavina del Rio T."/>
            <person name="Hammon N."/>
            <person name="Israni S."/>
            <person name="Pitluck S."/>
            <person name="Chain P."/>
            <person name="Malfatti S."/>
            <person name="Shin M."/>
            <person name="Vergez L."/>
            <person name="Schmutz J."/>
            <person name="Larimer F."/>
            <person name="Land M."/>
            <person name="Hauser L."/>
            <person name="Kyrpides N."/>
            <person name="Kim E."/>
            <person name="Tomasz A."/>
            <person name="Richardson P."/>
        </authorList>
    </citation>
    <scope>NUCLEOTIDE SEQUENCE [LARGE SCALE GENOMIC DNA]</scope>
    <source>
        <strain>JH9</strain>
    </source>
</reference>
<proteinExistence type="inferred from homology"/>
<keyword id="KW-1003">Cell membrane</keyword>
<keyword id="KW-0418">Kinase</keyword>
<keyword id="KW-0472">Membrane</keyword>
<keyword id="KW-0598">Phosphotransferase system</keyword>
<keyword id="KW-0762">Sugar transport</keyword>
<keyword id="KW-0808">Transferase</keyword>
<keyword id="KW-0812">Transmembrane</keyword>
<keyword id="KW-1133">Transmembrane helix</keyword>
<keyword id="KW-0813">Transport</keyword>
<protein>
    <recommendedName>
        <fullName>PTS system glucoside-specific EIICBA component</fullName>
    </recommendedName>
    <domain>
        <recommendedName>
            <fullName>Glucoside permease IIC component</fullName>
        </recommendedName>
        <alternativeName>
            <fullName>PTS system glucoside-specific EIIC component</fullName>
        </alternativeName>
    </domain>
    <domain>
        <recommendedName>
            <fullName>Glucoside-specific phosphotransferase enzyme IIB component</fullName>
            <ecNumber>2.7.1.-</ecNumber>
        </recommendedName>
        <alternativeName>
            <fullName>PTS system glucoside-specific EIIB component</fullName>
        </alternativeName>
    </domain>
    <domain>
        <recommendedName>
            <fullName>Glucoside-specific phosphotransferase enzyme IIA component</fullName>
        </recommendedName>
        <alternativeName>
            <fullName>PTS system glucoside-specific EIIA component</fullName>
        </alternativeName>
    </domain>
</protein>
<accession>A5IVW5</accession>
<name>PTU3C_STAA9</name>
<evidence type="ECO:0000250" key="1"/>
<evidence type="ECO:0000255" key="2">
    <source>
        <dbReference type="PROSITE-ProRule" id="PRU00416"/>
    </source>
</evidence>
<evidence type="ECO:0000255" key="3">
    <source>
        <dbReference type="PROSITE-ProRule" id="PRU00421"/>
    </source>
</evidence>
<evidence type="ECO:0000255" key="4">
    <source>
        <dbReference type="PROSITE-ProRule" id="PRU00426"/>
    </source>
</evidence>
<dbReference type="EC" id="2.7.1.-"/>
<dbReference type="EMBL" id="CP000703">
    <property type="protein sequence ID" value="ABQ50338.1"/>
    <property type="molecule type" value="Genomic_DNA"/>
</dbReference>
<dbReference type="SMR" id="A5IVW5"/>
<dbReference type="KEGG" id="saj:SaurJH9_2561"/>
<dbReference type="HOGENOM" id="CLU_012312_1_1_9"/>
<dbReference type="GO" id="GO:0005886">
    <property type="term" value="C:plasma membrane"/>
    <property type="evidence" value="ECO:0007669"/>
    <property type="project" value="UniProtKB-SubCell"/>
</dbReference>
<dbReference type="GO" id="GO:0055056">
    <property type="term" value="F:D-glucose transmembrane transporter activity"/>
    <property type="evidence" value="ECO:0007669"/>
    <property type="project" value="InterPro"/>
</dbReference>
<dbReference type="GO" id="GO:0016301">
    <property type="term" value="F:kinase activity"/>
    <property type="evidence" value="ECO:0007669"/>
    <property type="project" value="UniProtKB-KW"/>
</dbReference>
<dbReference type="GO" id="GO:0008982">
    <property type="term" value="F:protein-N(PI)-phosphohistidine-sugar phosphotransferase activity"/>
    <property type="evidence" value="ECO:0007669"/>
    <property type="project" value="InterPro"/>
</dbReference>
<dbReference type="GO" id="GO:0090563">
    <property type="term" value="F:protein-phosphocysteine-sugar phosphotransferase activity"/>
    <property type="evidence" value="ECO:0007669"/>
    <property type="project" value="TreeGrafter"/>
</dbReference>
<dbReference type="GO" id="GO:1904659">
    <property type="term" value="P:D-glucose transmembrane transport"/>
    <property type="evidence" value="ECO:0007669"/>
    <property type="project" value="InterPro"/>
</dbReference>
<dbReference type="GO" id="GO:0009401">
    <property type="term" value="P:phosphoenolpyruvate-dependent sugar phosphotransferase system"/>
    <property type="evidence" value="ECO:0007669"/>
    <property type="project" value="UniProtKB-KW"/>
</dbReference>
<dbReference type="CDD" id="cd00212">
    <property type="entry name" value="PTS_IIB_glc"/>
    <property type="match status" value="1"/>
</dbReference>
<dbReference type="FunFam" id="2.70.70.10:FF:000001">
    <property type="entry name" value="PTS system glucose-specific IIA component"/>
    <property type="match status" value="1"/>
</dbReference>
<dbReference type="FunFam" id="3.30.1360.60:FF:000001">
    <property type="entry name" value="PTS system glucose-specific IIBC component PtsG"/>
    <property type="match status" value="1"/>
</dbReference>
<dbReference type="Gene3D" id="2.70.70.10">
    <property type="entry name" value="Glucose Permease (Domain IIA)"/>
    <property type="match status" value="1"/>
</dbReference>
<dbReference type="Gene3D" id="3.30.1360.60">
    <property type="entry name" value="Glucose permease domain IIB"/>
    <property type="match status" value="1"/>
</dbReference>
<dbReference type="InterPro" id="IPR011055">
    <property type="entry name" value="Dup_hybrid_motif"/>
</dbReference>
<dbReference type="InterPro" id="IPR036878">
    <property type="entry name" value="Glu_permease_IIB"/>
</dbReference>
<dbReference type="InterPro" id="IPR018113">
    <property type="entry name" value="PTrfase_EIIB_Cys"/>
</dbReference>
<dbReference type="InterPro" id="IPR001127">
    <property type="entry name" value="PTS_EIIA_1_perm"/>
</dbReference>
<dbReference type="InterPro" id="IPR003352">
    <property type="entry name" value="PTS_EIIC"/>
</dbReference>
<dbReference type="InterPro" id="IPR013013">
    <property type="entry name" value="PTS_EIIC_1"/>
</dbReference>
<dbReference type="InterPro" id="IPR050429">
    <property type="entry name" value="PTS_Glucose_EIICBA"/>
</dbReference>
<dbReference type="InterPro" id="IPR001996">
    <property type="entry name" value="PTS_IIB_1"/>
</dbReference>
<dbReference type="InterPro" id="IPR011299">
    <property type="entry name" value="PTS_IIBC_glc"/>
</dbReference>
<dbReference type="NCBIfam" id="TIGR00826">
    <property type="entry name" value="EIIB_glc"/>
    <property type="match status" value="1"/>
</dbReference>
<dbReference type="NCBIfam" id="TIGR00830">
    <property type="entry name" value="PTBA"/>
    <property type="match status" value="1"/>
</dbReference>
<dbReference type="NCBIfam" id="TIGR02002">
    <property type="entry name" value="PTS-II-BC-glcB"/>
    <property type="match status" value="1"/>
</dbReference>
<dbReference type="PANTHER" id="PTHR30009">
    <property type="entry name" value="CYTOCHROME C-TYPE SYNTHESIS PROTEIN AND PTS TRANSMEMBRANE COMPONENT"/>
    <property type="match status" value="1"/>
</dbReference>
<dbReference type="PANTHER" id="PTHR30009:SF20">
    <property type="entry name" value="PTS SYSTEM GLUCOSE-SPECIFIC EIICB COMPONENT-RELATED"/>
    <property type="match status" value="1"/>
</dbReference>
<dbReference type="Pfam" id="PF00358">
    <property type="entry name" value="PTS_EIIA_1"/>
    <property type="match status" value="1"/>
</dbReference>
<dbReference type="Pfam" id="PF00367">
    <property type="entry name" value="PTS_EIIB"/>
    <property type="match status" value="1"/>
</dbReference>
<dbReference type="Pfam" id="PF02378">
    <property type="entry name" value="PTS_EIIC"/>
    <property type="match status" value="1"/>
</dbReference>
<dbReference type="SUPFAM" id="SSF51261">
    <property type="entry name" value="Duplicated hybrid motif"/>
    <property type="match status" value="1"/>
</dbReference>
<dbReference type="SUPFAM" id="SSF55604">
    <property type="entry name" value="Glucose permease domain IIB"/>
    <property type="match status" value="1"/>
</dbReference>
<dbReference type="PROSITE" id="PS51093">
    <property type="entry name" value="PTS_EIIA_TYPE_1"/>
    <property type="match status" value="1"/>
</dbReference>
<dbReference type="PROSITE" id="PS00371">
    <property type="entry name" value="PTS_EIIA_TYPE_1_HIS"/>
    <property type="match status" value="1"/>
</dbReference>
<dbReference type="PROSITE" id="PS51098">
    <property type="entry name" value="PTS_EIIB_TYPE_1"/>
    <property type="match status" value="1"/>
</dbReference>
<dbReference type="PROSITE" id="PS01035">
    <property type="entry name" value="PTS_EIIB_TYPE_1_CYS"/>
    <property type="match status" value="1"/>
</dbReference>
<dbReference type="PROSITE" id="PS51103">
    <property type="entry name" value="PTS_EIIC_TYPE_1"/>
    <property type="match status" value="1"/>
</dbReference>
<comment type="function">
    <text evidence="1">The phosphoenolpyruvate-dependent sugar phosphotransferase system (sugar PTS), a major carbohydrate active -transport system, catalyzes the phosphorylation of incoming sugar substrates concomitantly with their translocation across the cell membrane. This system is involved in alpha- and beta-glucoside transport (By similarity).</text>
</comment>
<comment type="subcellular location">
    <subcellularLocation>
        <location evidence="4">Cell membrane</location>
        <topology evidence="4">Multi-pass membrane protein</topology>
    </subcellularLocation>
</comment>
<comment type="domain">
    <text>The EIIC domain forms the PTS system translocation channel and contains the specific substrate-binding site.</text>
</comment>
<comment type="domain">
    <text>The EIIB domain is phosphorylated by phospho-EIIA on a cysteinyl or histidyl residue, depending on the transported sugar. Then, it transfers the phosphoryl group to the sugar substrate concomitantly with the sugar uptake processed by the EIIC domain.</text>
</comment>
<comment type="domain">
    <text>The EIIA domain is phosphorylated by phospho-HPr on a histidyl residue. Then, it transfers the phosphoryl group to the EIIB domain.</text>
</comment>
<organism>
    <name type="scientific">Staphylococcus aureus (strain JH9)</name>
    <dbReference type="NCBI Taxonomy" id="359786"/>
    <lineage>
        <taxon>Bacteria</taxon>
        <taxon>Bacillati</taxon>
        <taxon>Bacillota</taxon>
        <taxon>Bacilli</taxon>
        <taxon>Bacillales</taxon>
        <taxon>Staphylococcaceae</taxon>
        <taxon>Staphylococcus</taxon>
    </lineage>
</organism>